<protein>
    <recommendedName>
        <fullName>Transcriptional regulator MraZ</fullName>
    </recommendedName>
</protein>
<keyword id="KW-0963">Cytoplasm</keyword>
<keyword id="KW-0238">DNA-binding</keyword>
<keyword id="KW-0677">Repeat</keyword>
<keyword id="KW-0678">Repressor</keyword>
<keyword id="KW-0804">Transcription</keyword>
<keyword id="KW-0805">Transcription regulation</keyword>
<evidence type="ECO:0000255" key="1">
    <source>
        <dbReference type="HAMAP-Rule" id="MF_01008"/>
    </source>
</evidence>
<evidence type="ECO:0000255" key="2">
    <source>
        <dbReference type="PROSITE-ProRule" id="PRU01076"/>
    </source>
</evidence>
<proteinExistence type="inferred from homology"/>
<accession>B4TJ78</accession>
<sequence>MFRGATLVNLDSKGRLTVPTRYREQLIESATGQMVCTIDIHHPCLLLYPLPEWEIIEQKLSRLSSMNPVERRVQRLLLGHASECQMDGAGRLLIAPVLRQHAGLTKEVMLVGQFNKFELWDETTWYQQVKEDIDAEQSATETLSERLQDLSL</sequence>
<comment type="function">
    <text evidence="1">Negatively regulates its own expression and that of the subsequent genes in the proximal part of the division and cell wall (dcw) gene cluster. Acts by binding directly to DNA. May also regulate the expression of genes outside the dcw cluster.</text>
</comment>
<comment type="subunit">
    <text evidence="1">Forms oligomers.</text>
</comment>
<comment type="subcellular location">
    <subcellularLocation>
        <location evidence="1">Cytoplasm</location>
        <location evidence="1">Nucleoid</location>
    </subcellularLocation>
</comment>
<comment type="similarity">
    <text evidence="1">Belongs to the MraZ family.</text>
</comment>
<organism>
    <name type="scientific">Salmonella heidelberg (strain SL476)</name>
    <dbReference type="NCBI Taxonomy" id="454169"/>
    <lineage>
        <taxon>Bacteria</taxon>
        <taxon>Pseudomonadati</taxon>
        <taxon>Pseudomonadota</taxon>
        <taxon>Gammaproteobacteria</taxon>
        <taxon>Enterobacterales</taxon>
        <taxon>Enterobacteriaceae</taxon>
        <taxon>Salmonella</taxon>
    </lineage>
</organism>
<feature type="chain" id="PRO_1000191330" description="Transcriptional regulator MraZ">
    <location>
        <begin position="1"/>
        <end position="152"/>
    </location>
</feature>
<feature type="domain" description="SpoVT-AbrB 1" evidence="2">
    <location>
        <begin position="5"/>
        <end position="52"/>
    </location>
</feature>
<feature type="domain" description="SpoVT-AbrB 2" evidence="2">
    <location>
        <begin position="81"/>
        <end position="124"/>
    </location>
</feature>
<gene>
    <name evidence="1" type="primary">mraZ</name>
    <name type="ordered locus">SeHA_C0131</name>
</gene>
<name>MRAZ_SALHS</name>
<reference key="1">
    <citation type="journal article" date="2011" name="J. Bacteriol.">
        <title>Comparative genomics of 28 Salmonella enterica isolates: evidence for CRISPR-mediated adaptive sublineage evolution.</title>
        <authorList>
            <person name="Fricke W.F."/>
            <person name="Mammel M.K."/>
            <person name="McDermott P.F."/>
            <person name="Tartera C."/>
            <person name="White D.G."/>
            <person name="Leclerc J.E."/>
            <person name="Ravel J."/>
            <person name="Cebula T.A."/>
        </authorList>
    </citation>
    <scope>NUCLEOTIDE SEQUENCE [LARGE SCALE GENOMIC DNA]</scope>
    <source>
        <strain>SL476</strain>
    </source>
</reference>
<dbReference type="EMBL" id="CP001120">
    <property type="protein sequence ID" value="ACF69144.1"/>
    <property type="molecule type" value="Genomic_DNA"/>
</dbReference>
<dbReference type="RefSeq" id="WP_000488294.1">
    <property type="nucleotide sequence ID" value="NC_011083.1"/>
</dbReference>
<dbReference type="SMR" id="B4TJ78"/>
<dbReference type="KEGG" id="seh:SeHA_C0131"/>
<dbReference type="HOGENOM" id="CLU_107907_2_0_6"/>
<dbReference type="Proteomes" id="UP000001866">
    <property type="component" value="Chromosome"/>
</dbReference>
<dbReference type="GO" id="GO:0005737">
    <property type="term" value="C:cytoplasm"/>
    <property type="evidence" value="ECO:0007669"/>
    <property type="project" value="UniProtKB-UniRule"/>
</dbReference>
<dbReference type="GO" id="GO:0009295">
    <property type="term" value="C:nucleoid"/>
    <property type="evidence" value="ECO:0007669"/>
    <property type="project" value="UniProtKB-SubCell"/>
</dbReference>
<dbReference type="GO" id="GO:0003700">
    <property type="term" value="F:DNA-binding transcription factor activity"/>
    <property type="evidence" value="ECO:0007669"/>
    <property type="project" value="UniProtKB-UniRule"/>
</dbReference>
<dbReference type="GO" id="GO:0000976">
    <property type="term" value="F:transcription cis-regulatory region binding"/>
    <property type="evidence" value="ECO:0007669"/>
    <property type="project" value="TreeGrafter"/>
</dbReference>
<dbReference type="GO" id="GO:2000143">
    <property type="term" value="P:negative regulation of DNA-templated transcription initiation"/>
    <property type="evidence" value="ECO:0007669"/>
    <property type="project" value="TreeGrafter"/>
</dbReference>
<dbReference type="CDD" id="cd16321">
    <property type="entry name" value="MraZ_C"/>
    <property type="match status" value="1"/>
</dbReference>
<dbReference type="CDD" id="cd16320">
    <property type="entry name" value="MraZ_N"/>
    <property type="match status" value="1"/>
</dbReference>
<dbReference type="FunFam" id="3.40.1550.20:FF:000001">
    <property type="entry name" value="Transcriptional regulator MraZ"/>
    <property type="match status" value="1"/>
</dbReference>
<dbReference type="Gene3D" id="3.40.1550.20">
    <property type="entry name" value="Transcriptional regulator MraZ domain"/>
    <property type="match status" value="1"/>
</dbReference>
<dbReference type="HAMAP" id="MF_01008">
    <property type="entry name" value="MraZ"/>
    <property type="match status" value="1"/>
</dbReference>
<dbReference type="InterPro" id="IPR003444">
    <property type="entry name" value="MraZ"/>
</dbReference>
<dbReference type="InterPro" id="IPR035644">
    <property type="entry name" value="MraZ_C"/>
</dbReference>
<dbReference type="InterPro" id="IPR020603">
    <property type="entry name" value="MraZ_dom"/>
</dbReference>
<dbReference type="InterPro" id="IPR035642">
    <property type="entry name" value="MraZ_N"/>
</dbReference>
<dbReference type="InterPro" id="IPR038619">
    <property type="entry name" value="MraZ_sf"/>
</dbReference>
<dbReference type="InterPro" id="IPR007159">
    <property type="entry name" value="SpoVT-AbrB_dom"/>
</dbReference>
<dbReference type="InterPro" id="IPR037914">
    <property type="entry name" value="SpoVT-AbrB_sf"/>
</dbReference>
<dbReference type="NCBIfam" id="TIGR00242">
    <property type="entry name" value="division/cell wall cluster transcriptional repressor MraZ"/>
    <property type="match status" value="1"/>
</dbReference>
<dbReference type="PANTHER" id="PTHR34701">
    <property type="entry name" value="TRANSCRIPTIONAL REGULATOR MRAZ"/>
    <property type="match status" value="1"/>
</dbReference>
<dbReference type="PANTHER" id="PTHR34701:SF1">
    <property type="entry name" value="TRANSCRIPTIONAL REGULATOR MRAZ"/>
    <property type="match status" value="1"/>
</dbReference>
<dbReference type="Pfam" id="PF02381">
    <property type="entry name" value="MraZ"/>
    <property type="match status" value="2"/>
</dbReference>
<dbReference type="SUPFAM" id="SSF89447">
    <property type="entry name" value="AbrB/MazE/MraZ-like"/>
    <property type="match status" value="1"/>
</dbReference>
<dbReference type="PROSITE" id="PS51740">
    <property type="entry name" value="SPOVT_ABRB"/>
    <property type="match status" value="2"/>
</dbReference>